<accession>A7Z052</accession>
<gene>
    <name type="primary">WDR6</name>
</gene>
<organism>
    <name type="scientific">Bos taurus</name>
    <name type="common">Bovine</name>
    <dbReference type="NCBI Taxonomy" id="9913"/>
    <lineage>
        <taxon>Eukaryota</taxon>
        <taxon>Metazoa</taxon>
        <taxon>Chordata</taxon>
        <taxon>Craniata</taxon>
        <taxon>Vertebrata</taxon>
        <taxon>Euteleostomi</taxon>
        <taxon>Mammalia</taxon>
        <taxon>Eutheria</taxon>
        <taxon>Laurasiatheria</taxon>
        <taxon>Artiodactyla</taxon>
        <taxon>Ruminantia</taxon>
        <taxon>Pecora</taxon>
        <taxon>Bovidae</taxon>
        <taxon>Bovinae</taxon>
        <taxon>Bos</taxon>
    </lineage>
</organism>
<proteinExistence type="evidence at transcript level"/>
<keyword id="KW-0007">Acetylation</keyword>
<keyword id="KW-0131">Cell cycle</keyword>
<keyword id="KW-0963">Cytoplasm</keyword>
<keyword id="KW-1185">Reference proteome</keyword>
<keyword id="KW-0677">Repeat</keyword>
<keyword id="KW-0819">tRNA processing</keyword>
<keyword id="KW-0853">WD repeat</keyword>
<sequence length="1124" mass="122056">MDAHEDYVWPRATSELILLPVTGLECVGERLLAGEGPDVLVYTLDFGGHLRMMKRVQNLLGHYLIHGFRVRPEPNGDLDSEVMVAAFGSKGLRIVKISWGQGRFRELWRSGLWNMSDWIWDARWLEGNIALALGHNSVVLYDPVVGCSLQDVPCTDRCTLSSACLIGDTWKELTVVAGAVSNQLLVWYPAAALTDDKPVVPDRRVSGHVGVIFSMSYLESKGLLATASEDRSVRIWKVGDLRVPGGRVQNIGHCFGHSARVWQVKLLENYLISAGEDCVCLVWSHEGEILQAFRGHQGRGIRALAAHERQAWVITGGDDSGIRLWHLVGRGHPGSGVFALSFKSHSRPGVLKAVTLAGSWRVLAVTDAGALYLYDLEVKCWEQLLEDKRFQSYCLLEAAPGPEGFGLCALANGEGRVKVVPINTPTAAVDLTLFPGKVHSLSWALRGYEELLLLASGPGGVVACLEISAAPSGKAIFVKERCRYLLPPSKQRWHTCSAFLPPGDFLVCGDRRGSVLLYPSRPDLLKDLGVVSKVGAITSAPGAGSGEGEPSLAEWGPMSTLPSLHGKQGVTSVTCHGGYVYTTGRDGSYYQLFVRGGQLQPVLRQKPCRGMNWVAGVRMVADGNMVILGFHANEFVVWSPRSHEKLHIINCGGGHRSWAFSDTEAAMAFAYLKDGDVMLYRALGGCTRPHVILRESLHGREITCVKRVGSITLGPESGVPSFLQPDHLEPGEPVEPGSEGPGLIDIVITCSEDTTVCVLALPTATGSAHALTAVCNHISSVRAVAVWGVGTPGGPQDPQPGLTAHVVSAGGRAEMHCFTIMVTPDPSPPSRLACHVMHLSSHRLDEYWDRQRHRHRMIKVDPETRYMSLAVCELDRPGLGPLVAAACSDGAVRLFLLQDSGRRLQLLAETSHHKRCVLKVHAFTHEAPNRRRRLFLCSAATDGSLAFWDLTTMLDQDSPALEAAADLGLPFQLGSPCLTVQAHSCGVNSLHTLPTREGHLVASGSEDGSLHVFVLAVEMPELEEAVGGAELLPQLQVLEEYSVPCAHAAHVTGLKILSRSLMVSASIDQRLTFWRLGHGEPTFMNSTVYHVADVADMDCWPVSPEFGHRCALGGQGLEVYNWYD</sequence>
<dbReference type="EMBL" id="BC153250">
    <property type="protein sequence ID" value="AAI53251.1"/>
    <property type="molecule type" value="mRNA"/>
</dbReference>
<dbReference type="RefSeq" id="NP_001099093.1">
    <property type="nucleotide sequence ID" value="NM_001105623.1"/>
</dbReference>
<dbReference type="RefSeq" id="XP_010816041.2">
    <property type="nucleotide sequence ID" value="XM_010817739.4"/>
</dbReference>
<dbReference type="FunCoup" id="A7Z052">
    <property type="interactions" value="2757"/>
</dbReference>
<dbReference type="STRING" id="9913.ENSBTAP00000025167"/>
<dbReference type="PaxDb" id="9913-ENSBTAP00000025167"/>
<dbReference type="GeneID" id="526884"/>
<dbReference type="KEGG" id="bta:526884"/>
<dbReference type="CTD" id="11180"/>
<dbReference type="eggNOG" id="KOG0974">
    <property type="taxonomic scope" value="Eukaryota"/>
</dbReference>
<dbReference type="HOGENOM" id="CLU_002615_0_0_1"/>
<dbReference type="InParanoid" id="A7Z052"/>
<dbReference type="OrthoDB" id="5594999at2759"/>
<dbReference type="TreeFam" id="TF313984"/>
<dbReference type="Proteomes" id="UP000009136">
    <property type="component" value="Unplaced"/>
</dbReference>
<dbReference type="GO" id="GO:0005737">
    <property type="term" value="C:cytoplasm"/>
    <property type="evidence" value="ECO:0000318"/>
    <property type="project" value="GO_Central"/>
</dbReference>
<dbReference type="GO" id="GO:0030234">
    <property type="term" value="F:enzyme regulator activity"/>
    <property type="evidence" value="ECO:0000250"/>
    <property type="project" value="UniProtKB"/>
</dbReference>
<dbReference type="GO" id="GO:0000049">
    <property type="term" value="F:tRNA binding"/>
    <property type="evidence" value="ECO:0000250"/>
    <property type="project" value="UniProtKB"/>
</dbReference>
<dbReference type="GO" id="GO:0030488">
    <property type="term" value="P:tRNA methylation"/>
    <property type="evidence" value="ECO:0000318"/>
    <property type="project" value="GO_Central"/>
</dbReference>
<dbReference type="GO" id="GO:0002130">
    <property type="term" value="P:wobble position ribose methylation"/>
    <property type="evidence" value="ECO:0000250"/>
    <property type="project" value="UniProtKB"/>
</dbReference>
<dbReference type="FunFam" id="2.130.10.10:FF:000806">
    <property type="entry name" value="WD repeat-containing protein 6"/>
    <property type="match status" value="1"/>
</dbReference>
<dbReference type="FunFam" id="2.130.10.10:FF:000901">
    <property type="entry name" value="WD repeat-containing protein 6"/>
    <property type="match status" value="1"/>
</dbReference>
<dbReference type="FunFam" id="2.130.10.10:FF:002093">
    <property type="entry name" value="WD repeat-containing protein 6"/>
    <property type="match status" value="1"/>
</dbReference>
<dbReference type="Gene3D" id="2.130.10.10">
    <property type="entry name" value="YVTN repeat-like/Quinoprotein amine dehydrogenase"/>
    <property type="match status" value="3"/>
</dbReference>
<dbReference type="InterPro" id="IPR051973">
    <property type="entry name" value="tRNA_Anticodon_Mtase-Reg"/>
</dbReference>
<dbReference type="InterPro" id="IPR015943">
    <property type="entry name" value="WD40/YVTN_repeat-like_dom_sf"/>
</dbReference>
<dbReference type="InterPro" id="IPR036322">
    <property type="entry name" value="WD40_repeat_dom_sf"/>
</dbReference>
<dbReference type="InterPro" id="IPR001680">
    <property type="entry name" value="WD40_rpt"/>
</dbReference>
<dbReference type="PANTHER" id="PTHR14344">
    <property type="entry name" value="WD REPEAT PROTEIN"/>
    <property type="match status" value="1"/>
</dbReference>
<dbReference type="PANTHER" id="PTHR14344:SF3">
    <property type="entry name" value="WD REPEAT-CONTAINING PROTEIN 6"/>
    <property type="match status" value="1"/>
</dbReference>
<dbReference type="Pfam" id="PF00400">
    <property type="entry name" value="WD40"/>
    <property type="match status" value="3"/>
</dbReference>
<dbReference type="SMART" id="SM00320">
    <property type="entry name" value="WD40"/>
    <property type="match status" value="7"/>
</dbReference>
<dbReference type="SUPFAM" id="SSF101908">
    <property type="entry name" value="Putative isomerase YbhE"/>
    <property type="match status" value="1"/>
</dbReference>
<dbReference type="SUPFAM" id="SSF50978">
    <property type="entry name" value="WD40 repeat-like"/>
    <property type="match status" value="4"/>
</dbReference>
<dbReference type="PROSITE" id="PS00678">
    <property type="entry name" value="WD_REPEATS_1"/>
    <property type="match status" value="1"/>
</dbReference>
<dbReference type="PROSITE" id="PS50082">
    <property type="entry name" value="WD_REPEATS_2"/>
    <property type="match status" value="1"/>
</dbReference>
<dbReference type="PROSITE" id="PS50294">
    <property type="entry name" value="WD_REPEATS_REGION"/>
    <property type="match status" value="1"/>
</dbReference>
<feature type="chain" id="PRO_0000393459" description="tRNA (34-2'-O)-methyltransferase regulator WDR6">
    <location>
        <begin position="1"/>
        <end position="1124"/>
    </location>
</feature>
<feature type="repeat" description="WD 1">
    <location>
        <begin position="53"/>
        <end position="97"/>
    </location>
</feature>
<feature type="repeat" description="WD 2">
    <location>
        <begin position="105"/>
        <end position="143"/>
    </location>
</feature>
<feature type="repeat" description="WD 3">
    <location>
        <begin position="147"/>
        <end position="189"/>
    </location>
</feature>
<feature type="repeat" description="WD 4">
    <location>
        <begin position="200"/>
        <end position="238"/>
    </location>
</feature>
<feature type="repeat" description="WD 5">
    <location>
        <begin position="247"/>
        <end position="285"/>
    </location>
</feature>
<feature type="repeat" description="WD 6">
    <location>
        <begin position="289"/>
        <end position="327"/>
    </location>
</feature>
<feature type="repeat" description="WD 7">
    <location>
        <begin position="335"/>
        <end position="376"/>
    </location>
</feature>
<feature type="repeat" description="WD 8">
    <location>
        <begin position="381"/>
        <end position="422"/>
    </location>
</feature>
<feature type="repeat" description="WD 9">
    <location>
        <begin position="425"/>
        <end position="470"/>
    </location>
</feature>
<feature type="repeat" description="WD 10">
    <location>
        <begin position="476"/>
        <end position="520"/>
    </location>
</feature>
<feature type="repeat" description="WD 11">
    <location>
        <begin position="557"/>
        <end position="596"/>
    </location>
</feature>
<feature type="repeat" description="WD 12">
    <location>
        <begin position="602"/>
        <end position="640"/>
    </location>
</feature>
<feature type="repeat" description="WD 13">
    <location>
        <begin position="643"/>
        <end position="682"/>
    </location>
</feature>
<feature type="repeat" description="WD 14">
    <location>
        <begin position="743"/>
        <end position="789"/>
    </location>
</feature>
<feature type="repeat" description="WD 15">
    <location>
        <begin position="852"/>
        <end position="897"/>
    </location>
</feature>
<feature type="repeat" description="WD 16">
    <location>
        <begin position="905"/>
        <end position="950"/>
    </location>
</feature>
<feature type="repeat" description="WD 17">
    <location>
        <begin position="974"/>
        <end position="1015"/>
    </location>
</feature>
<feature type="repeat" description="WD 18">
    <location>
        <begin position="1039"/>
        <end position="1076"/>
    </location>
</feature>
<feature type="repeat" description="WD 19">
    <location>
        <begin position="1082"/>
        <end position="1124"/>
    </location>
</feature>
<feature type="modified residue" description="N-acetylmethionine" evidence="2">
    <location>
        <position position="1"/>
    </location>
</feature>
<name>WDR6_BOVIN</name>
<reference key="1">
    <citation type="submission" date="2007-09" db="EMBL/GenBank/DDBJ databases">
        <authorList>
            <consortium name="NIH - Mammalian Gene Collection (MGC) project"/>
        </authorList>
    </citation>
    <scope>NUCLEOTIDE SEQUENCE [LARGE SCALE MRNA]</scope>
    <source>
        <strain>Hereford</strain>
        <tissue>Uterus</tissue>
    </source>
</reference>
<evidence type="ECO:0000250" key="1">
    <source>
        <dbReference type="UniProtKB" id="Q5XFW6"/>
    </source>
</evidence>
<evidence type="ECO:0000250" key="2">
    <source>
        <dbReference type="UniProtKB" id="Q9NNW5"/>
    </source>
</evidence>
<evidence type="ECO:0000305" key="3"/>
<protein>
    <recommendedName>
        <fullName evidence="3">tRNA (34-2'-O)-methyltransferase regulator WDR6</fullName>
    </recommendedName>
    <alternativeName>
        <fullName>WD repeat-containing protein 6</fullName>
    </alternativeName>
</protein>
<comment type="function">
    <text evidence="2">Together with methyltransferase FTSJ1, methylates the 2'-O-ribose of nucleotides at position 34 of the tRNA anticodon loop of substrate tRNAs (By similarity). Required for the correct positioning of the substrate tRNA for methylation (By similarity). Required to suppress amino acid starvation-induced autophagy (By similarity). Enhances the STK11/LKB1-induced cell growth suppression activity (By similarity).</text>
</comment>
<comment type="subunit">
    <text evidence="1 2">Interacts with FTSJ1; the interaction is direct, and required for 2'-O-methylation of position 34 in substrate tRNAs (By similarity). Interacts with IRS4 (By similarity). Interacts with STK11/LKB1 (By similarity).</text>
</comment>
<comment type="subcellular location">
    <subcellularLocation>
        <location evidence="2">Cytoplasm</location>
    </subcellularLocation>
    <text evidence="2">Colocalizes in the cytoplasm with STK11/LKB1.</text>
</comment>
<comment type="similarity">
    <text evidence="3">Belongs to the WD repeat WDR6 family.</text>
</comment>